<accession>B7HL27</accession>
<comment type="function">
    <text evidence="1">Catalyzes the conversion of 3-deoxy-D-arabino-heptulosonate 7-phosphate (DAHP) to dehydroquinate (DHQ).</text>
</comment>
<comment type="catalytic activity">
    <reaction evidence="1">
        <text>7-phospho-2-dehydro-3-deoxy-D-arabino-heptonate = 3-dehydroquinate + phosphate</text>
        <dbReference type="Rhea" id="RHEA:21968"/>
        <dbReference type="ChEBI" id="CHEBI:32364"/>
        <dbReference type="ChEBI" id="CHEBI:43474"/>
        <dbReference type="ChEBI" id="CHEBI:58394"/>
        <dbReference type="EC" id="4.2.3.4"/>
    </reaction>
</comment>
<comment type="cofactor">
    <cofactor evidence="1">
        <name>Co(2+)</name>
        <dbReference type="ChEBI" id="CHEBI:48828"/>
    </cofactor>
    <cofactor evidence="1">
        <name>Zn(2+)</name>
        <dbReference type="ChEBI" id="CHEBI:29105"/>
    </cofactor>
    <text evidence="1">Binds 1 divalent metal cation per subunit. Can use either Co(2+) or Zn(2+).</text>
</comment>
<comment type="cofactor">
    <cofactor evidence="1">
        <name>NAD(+)</name>
        <dbReference type="ChEBI" id="CHEBI:57540"/>
    </cofactor>
</comment>
<comment type="pathway">
    <text evidence="1">Metabolic intermediate biosynthesis; chorismate biosynthesis; chorismate from D-erythrose 4-phosphate and phosphoenolpyruvate: step 2/7.</text>
</comment>
<comment type="subcellular location">
    <subcellularLocation>
        <location evidence="1">Cytoplasm</location>
    </subcellularLocation>
</comment>
<comment type="similarity">
    <text evidence="1">Belongs to the sugar phosphate cyclases superfamily. Dehydroquinate synthase family.</text>
</comment>
<sequence>MENIHIQTKSKEYDVHVGKESLSHLTTIVQNMQPSVSNIMIISDEAVAPLHLQTVVDALQIDQKVFSFVVPSGEKEKSFENFYAAHTSALENKLDRNSLIIALGGGMIGDLAGFVAASFMRGIRFVQVPTTLLAHDSAVGGKVAINHPLGKNMIGAFHQPEAVVYHTPFLQSLPEKEWRSGYAEVIKHALIGDVKLYHWLKEEVQTLADLRDEKLIHILTKAIPVKANIVAQDETEKGVRAHLNFGHTLGHALEKELGYGNITHGDGVAVGMLFAIFLSEQVYKVNLAYEEMKQWFLKYGYPKMPSDLSVERLVGLMKQDKKANAGTIHMVLMQEYGVVNVVSIPDETVHIALEAFQKDMGIRSR</sequence>
<name>AROB_BACC7</name>
<gene>
    <name evidence="1" type="primary">aroB</name>
    <name type="ordered locus">BCAH187_A1680</name>
</gene>
<organism>
    <name type="scientific">Bacillus cereus (strain AH187)</name>
    <dbReference type="NCBI Taxonomy" id="405534"/>
    <lineage>
        <taxon>Bacteria</taxon>
        <taxon>Bacillati</taxon>
        <taxon>Bacillota</taxon>
        <taxon>Bacilli</taxon>
        <taxon>Bacillales</taxon>
        <taxon>Bacillaceae</taxon>
        <taxon>Bacillus</taxon>
        <taxon>Bacillus cereus group</taxon>
    </lineage>
</organism>
<keyword id="KW-0028">Amino-acid biosynthesis</keyword>
<keyword id="KW-0057">Aromatic amino acid biosynthesis</keyword>
<keyword id="KW-0170">Cobalt</keyword>
<keyword id="KW-0963">Cytoplasm</keyword>
<keyword id="KW-0456">Lyase</keyword>
<keyword id="KW-0479">Metal-binding</keyword>
<keyword id="KW-0520">NAD</keyword>
<keyword id="KW-0547">Nucleotide-binding</keyword>
<keyword id="KW-0862">Zinc</keyword>
<dbReference type="EC" id="4.2.3.4" evidence="1"/>
<dbReference type="EMBL" id="CP001177">
    <property type="protein sequence ID" value="ACJ81095.1"/>
    <property type="molecule type" value="Genomic_DNA"/>
</dbReference>
<dbReference type="SMR" id="B7HL27"/>
<dbReference type="KEGG" id="bcr:BCAH187_A1680"/>
<dbReference type="HOGENOM" id="CLU_001201_0_2_9"/>
<dbReference type="UniPathway" id="UPA00053">
    <property type="reaction ID" value="UER00085"/>
</dbReference>
<dbReference type="Proteomes" id="UP000002214">
    <property type="component" value="Chromosome"/>
</dbReference>
<dbReference type="GO" id="GO:0005737">
    <property type="term" value="C:cytoplasm"/>
    <property type="evidence" value="ECO:0007669"/>
    <property type="project" value="UniProtKB-SubCell"/>
</dbReference>
<dbReference type="GO" id="GO:0003856">
    <property type="term" value="F:3-dehydroquinate synthase activity"/>
    <property type="evidence" value="ECO:0007669"/>
    <property type="project" value="UniProtKB-UniRule"/>
</dbReference>
<dbReference type="GO" id="GO:0046872">
    <property type="term" value="F:metal ion binding"/>
    <property type="evidence" value="ECO:0007669"/>
    <property type="project" value="UniProtKB-KW"/>
</dbReference>
<dbReference type="GO" id="GO:0000166">
    <property type="term" value="F:nucleotide binding"/>
    <property type="evidence" value="ECO:0007669"/>
    <property type="project" value="UniProtKB-KW"/>
</dbReference>
<dbReference type="GO" id="GO:0008652">
    <property type="term" value="P:amino acid biosynthetic process"/>
    <property type="evidence" value="ECO:0007669"/>
    <property type="project" value="UniProtKB-KW"/>
</dbReference>
<dbReference type="GO" id="GO:0009073">
    <property type="term" value="P:aromatic amino acid family biosynthetic process"/>
    <property type="evidence" value="ECO:0007669"/>
    <property type="project" value="UniProtKB-KW"/>
</dbReference>
<dbReference type="GO" id="GO:0009423">
    <property type="term" value="P:chorismate biosynthetic process"/>
    <property type="evidence" value="ECO:0007669"/>
    <property type="project" value="UniProtKB-UniRule"/>
</dbReference>
<dbReference type="CDD" id="cd08195">
    <property type="entry name" value="DHQS"/>
    <property type="match status" value="1"/>
</dbReference>
<dbReference type="FunFam" id="1.20.1090.10:FF:000008">
    <property type="entry name" value="3-dehydroquinate synthase"/>
    <property type="match status" value="1"/>
</dbReference>
<dbReference type="FunFam" id="3.40.50.1970:FF:000001">
    <property type="entry name" value="3-dehydroquinate synthase"/>
    <property type="match status" value="1"/>
</dbReference>
<dbReference type="Gene3D" id="3.40.50.1970">
    <property type="match status" value="1"/>
</dbReference>
<dbReference type="Gene3D" id="1.20.1090.10">
    <property type="entry name" value="Dehydroquinate synthase-like - alpha domain"/>
    <property type="match status" value="1"/>
</dbReference>
<dbReference type="HAMAP" id="MF_00110">
    <property type="entry name" value="DHQ_synthase"/>
    <property type="match status" value="1"/>
</dbReference>
<dbReference type="InterPro" id="IPR050071">
    <property type="entry name" value="Dehydroquinate_synthase"/>
</dbReference>
<dbReference type="InterPro" id="IPR016037">
    <property type="entry name" value="DHQ_synth_AroB"/>
</dbReference>
<dbReference type="InterPro" id="IPR030963">
    <property type="entry name" value="DHQ_synth_fam"/>
</dbReference>
<dbReference type="InterPro" id="IPR030960">
    <property type="entry name" value="DHQS/DOIS_N"/>
</dbReference>
<dbReference type="InterPro" id="IPR056179">
    <property type="entry name" value="DHQS_C"/>
</dbReference>
<dbReference type="NCBIfam" id="TIGR01357">
    <property type="entry name" value="aroB"/>
    <property type="match status" value="1"/>
</dbReference>
<dbReference type="PANTHER" id="PTHR43622">
    <property type="entry name" value="3-DEHYDROQUINATE SYNTHASE"/>
    <property type="match status" value="1"/>
</dbReference>
<dbReference type="PANTHER" id="PTHR43622:SF7">
    <property type="entry name" value="3-DEHYDROQUINATE SYNTHASE, CHLOROPLASTIC"/>
    <property type="match status" value="1"/>
</dbReference>
<dbReference type="Pfam" id="PF01761">
    <property type="entry name" value="DHQ_synthase"/>
    <property type="match status" value="1"/>
</dbReference>
<dbReference type="Pfam" id="PF24621">
    <property type="entry name" value="DHQS_C"/>
    <property type="match status" value="1"/>
</dbReference>
<dbReference type="PIRSF" id="PIRSF001455">
    <property type="entry name" value="DHQ_synth"/>
    <property type="match status" value="1"/>
</dbReference>
<dbReference type="SUPFAM" id="SSF56796">
    <property type="entry name" value="Dehydroquinate synthase-like"/>
    <property type="match status" value="1"/>
</dbReference>
<evidence type="ECO:0000255" key="1">
    <source>
        <dbReference type="HAMAP-Rule" id="MF_00110"/>
    </source>
</evidence>
<reference key="1">
    <citation type="submission" date="2008-10" db="EMBL/GenBank/DDBJ databases">
        <title>Genome sequence of Bacillus cereus AH187.</title>
        <authorList>
            <person name="Dodson R.J."/>
            <person name="Durkin A.S."/>
            <person name="Rosovitz M.J."/>
            <person name="Rasko D.A."/>
            <person name="Kolsto A.B."/>
            <person name="Okstad O.A."/>
            <person name="Ravel J."/>
            <person name="Sutton G."/>
        </authorList>
    </citation>
    <scope>NUCLEOTIDE SEQUENCE [LARGE SCALE GENOMIC DNA]</scope>
    <source>
        <strain>AH187</strain>
    </source>
</reference>
<protein>
    <recommendedName>
        <fullName evidence="1">3-dehydroquinate synthase</fullName>
        <shortName evidence="1">DHQS</shortName>
        <ecNumber evidence="1">4.2.3.4</ecNumber>
    </recommendedName>
</protein>
<proteinExistence type="inferred from homology"/>
<feature type="chain" id="PRO_1000117474" description="3-dehydroquinate synthase">
    <location>
        <begin position="1"/>
        <end position="365"/>
    </location>
</feature>
<feature type="binding site" evidence="1">
    <location>
        <begin position="72"/>
        <end position="77"/>
    </location>
    <ligand>
        <name>NAD(+)</name>
        <dbReference type="ChEBI" id="CHEBI:57540"/>
    </ligand>
</feature>
<feature type="binding site" evidence="1">
    <location>
        <begin position="130"/>
        <end position="131"/>
    </location>
    <ligand>
        <name>NAD(+)</name>
        <dbReference type="ChEBI" id="CHEBI:57540"/>
    </ligand>
</feature>
<feature type="binding site" evidence="1">
    <location>
        <position position="142"/>
    </location>
    <ligand>
        <name>NAD(+)</name>
        <dbReference type="ChEBI" id="CHEBI:57540"/>
    </ligand>
</feature>
<feature type="binding site" evidence="1">
    <location>
        <position position="151"/>
    </location>
    <ligand>
        <name>NAD(+)</name>
        <dbReference type="ChEBI" id="CHEBI:57540"/>
    </ligand>
</feature>
<feature type="binding site" evidence="1">
    <location>
        <position position="184"/>
    </location>
    <ligand>
        <name>Zn(2+)</name>
        <dbReference type="ChEBI" id="CHEBI:29105"/>
    </ligand>
</feature>
<feature type="binding site" evidence="1">
    <location>
        <position position="247"/>
    </location>
    <ligand>
        <name>Zn(2+)</name>
        <dbReference type="ChEBI" id="CHEBI:29105"/>
    </ligand>
</feature>
<feature type="binding site" evidence="1">
    <location>
        <position position="264"/>
    </location>
    <ligand>
        <name>Zn(2+)</name>
        <dbReference type="ChEBI" id="CHEBI:29105"/>
    </ligand>
</feature>